<reference key="1">
    <citation type="journal article" date="2006" name="PLoS Genet.">
        <title>Secrets of soil survival revealed by the genome sequence of Arthrobacter aurescens TC1.</title>
        <authorList>
            <person name="Mongodin E.F."/>
            <person name="Shapir N."/>
            <person name="Daugherty S.C."/>
            <person name="DeBoy R.T."/>
            <person name="Emerson J.B."/>
            <person name="Shvartzbeyn A."/>
            <person name="Radune D."/>
            <person name="Vamathevan J."/>
            <person name="Riggs F."/>
            <person name="Grinberg V."/>
            <person name="Khouri H.M."/>
            <person name="Wackett L.P."/>
            <person name="Nelson K.E."/>
            <person name="Sadowsky M.J."/>
        </authorList>
    </citation>
    <scope>NUCLEOTIDE SEQUENCE [LARGE SCALE GENOMIC DNA]</scope>
    <source>
        <strain>TC1</strain>
    </source>
</reference>
<gene>
    <name evidence="1" type="primary">leuS</name>
    <name type="ordered locus">AAur_2246</name>
</gene>
<protein>
    <recommendedName>
        <fullName evidence="1">Leucine--tRNA ligase</fullName>
        <ecNumber evidence="1">6.1.1.4</ecNumber>
    </recommendedName>
    <alternativeName>
        <fullName evidence="1">Leucyl-tRNA synthetase</fullName>
        <shortName evidence="1">LeuRS</shortName>
    </alternativeName>
</protein>
<dbReference type="EC" id="6.1.1.4" evidence="1"/>
<dbReference type="EMBL" id="CP000474">
    <property type="protein sequence ID" value="ABM09960.1"/>
    <property type="status" value="ALT_INIT"/>
    <property type="molecule type" value="Genomic_DNA"/>
</dbReference>
<dbReference type="RefSeq" id="WP_043806115.1">
    <property type="nucleotide sequence ID" value="NC_008711.1"/>
</dbReference>
<dbReference type="SMR" id="A1R6X5"/>
<dbReference type="STRING" id="290340.AAur_2246"/>
<dbReference type="KEGG" id="aau:AAur_2246"/>
<dbReference type="eggNOG" id="COG0495">
    <property type="taxonomic scope" value="Bacteria"/>
</dbReference>
<dbReference type="HOGENOM" id="CLU_004427_0_0_11"/>
<dbReference type="OrthoDB" id="9810365at2"/>
<dbReference type="Proteomes" id="UP000000637">
    <property type="component" value="Chromosome"/>
</dbReference>
<dbReference type="GO" id="GO:0005829">
    <property type="term" value="C:cytosol"/>
    <property type="evidence" value="ECO:0007669"/>
    <property type="project" value="TreeGrafter"/>
</dbReference>
<dbReference type="GO" id="GO:0002161">
    <property type="term" value="F:aminoacyl-tRNA deacylase activity"/>
    <property type="evidence" value="ECO:0007669"/>
    <property type="project" value="InterPro"/>
</dbReference>
<dbReference type="GO" id="GO:0005524">
    <property type="term" value="F:ATP binding"/>
    <property type="evidence" value="ECO:0007669"/>
    <property type="project" value="UniProtKB-UniRule"/>
</dbReference>
<dbReference type="GO" id="GO:0004823">
    <property type="term" value="F:leucine-tRNA ligase activity"/>
    <property type="evidence" value="ECO:0007669"/>
    <property type="project" value="UniProtKB-UniRule"/>
</dbReference>
<dbReference type="GO" id="GO:0006429">
    <property type="term" value="P:leucyl-tRNA aminoacylation"/>
    <property type="evidence" value="ECO:0007669"/>
    <property type="project" value="UniProtKB-UniRule"/>
</dbReference>
<dbReference type="CDD" id="cd07958">
    <property type="entry name" value="Anticodon_Ia_Leu_BEm"/>
    <property type="match status" value="1"/>
</dbReference>
<dbReference type="CDD" id="cd00812">
    <property type="entry name" value="LeuRS_core"/>
    <property type="match status" value="1"/>
</dbReference>
<dbReference type="FunFam" id="1.10.730.10:FF:000002">
    <property type="entry name" value="Leucine--tRNA ligase"/>
    <property type="match status" value="1"/>
</dbReference>
<dbReference type="FunFam" id="3.40.50.620:FF:000003">
    <property type="entry name" value="Leucine--tRNA ligase"/>
    <property type="match status" value="1"/>
</dbReference>
<dbReference type="FunFam" id="3.40.50.620:FF:000056">
    <property type="entry name" value="Leucine--tRNA ligase"/>
    <property type="match status" value="1"/>
</dbReference>
<dbReference type="Gene3D" id="3.10.20.590">
    <property type="match status" value="1"/>
</dbReference>
<dbReference type="Gene3D" id="3.40.50.620">
    <property type="entry name" value="HUPs"/>
    <property type="match status" value="2"/>
</dbReference>
<dbReference type="Gene3D" id="1.10.730.10">
    <property type="entry name" value="Isoleucyl-tRNA Synthetase, Domain 1"/>
    <property type="match status" value="1"/>
</dbReference>
<dbReference type="Gene3D" id="3.90.740.10">
    <property type="entry name" value="Valyl/Leucyl/Isoleucyl-tRNA synthetase, editing domain"/>
    <property type="match status" value="1"/>
</dbReference>
<dbReference type="HAMAP" id="MF_00049_B">
    <property type="entry name" value="Leu_tRNA_synth_B"/>
    <property type="match status" value="1"/>
</dbReference>
<dbReference type="InterPro" id="IPR001412">
    <property type="entry name" value="aa-tRNA-synth_I_CS"/>
</dbReference>
<dbReference type="InterPro" id="IPR002300">
    <property type="entry name" value="aa-tRNA-synth_Ia"/>
</dbReference>
<dbReference type="InterPro" id="IPR002302">
    <property type="entry name" value="Leu-tRNA-ligase"/>
</dbReference>
<dbReference type="InterPro" id="IPR025709">
    <property type="entry name" value="Leu_tRNA-synth_edit"/>
</dbReference>
<dbReference type="InterPro" id="IPR013155">
    <property type="entry name" value="M/V/L/I-tRNA-synth_anticd-bd"/>
</dbReference>
<dbReference type="InterPro" id="IPR015413">
    <property type="entry name" value="Methionyl/Leucyl_tRNA_Synth"/>
</dbReference>
<dbReference type="InterPro" id="IPR014729">
    <property type="entry name" value="Rossmann-like_a/b/a_fold"/>
</dbReference>
<dbReference type="InterPro" id="IPR009080">
    <property type="entry name" value="tRNAsynth_Ia_anticodon-bd"/>
</dbReference>
<dbReference type="InterPro" id="IPR009008">
    <property type="entry name" value="Val/Leu/Ile-tRNA-synth_edit"/>
</dbReference>
<dbReference type="NCBIfam" id="TIGR00396">
    <property type="entry name" value="leuS_bact"/>
    <property type="match status" value="1"/>
</dbReference>
<dbReference type="PANTHER" id="PTHR43740:SF2">
    <property type="entry name" value="LEUCINE--TRNA LIGASE, MITOCHONDRIAL"/>
    <property type="match status" value="1"/>
</dbReference>
<dbReference type="PANTHER" id="PTHR43740">
    <property type="entry name" value="LEUCYL-TRNA SYNTHETASE"/>
    <property type="match status" value="1"/>
</dbReference>
<dbReference type="Pfam" id="PF08264">
    <property type="entry name" value="Anticodon_1"/>
    <property type="match status" value="1"/>
</dbReference>
<dbReference type="Pfam" id="PF00133">
    <property type="entry name" value="tRNA-synt_1"/>
    <property type="match status" value="1"/>
</dbReference>
<dbReference type="Pfam" id="PF13603">
    <property type="entry name" value="tRNA-synt_1_2"/>
    <property type="match status" value="1"/>
</dbReference>
<dbReference type="Pfam" id="PF09334">
    <property type="entry name" value="tRNA-synt_1g"/>
    <property type="match status" value="1"/>
</dbReference>
<dbReference type="PRINTS" id="PR00985">
    <property type="entry name" value="TRNASYNTHLEU"/>
</dbReference>
<dbReference type="SUPFAM" id="SSF47323">
    <property type="entry name" value="Anticodon-binding domain of a subclass of class I aminoacyl-tRNA synthetases"/>
    <property type="match status" value="1"/>
</dbReference>
<dbReference type="SUPFAM" id="SSF52374">
    <property type="entry name" value="Nucleotidylyl transferase"/>
    <property type="match status" value="1"/>
</dbReference>
<dbReference type="SUPFAM" id="SSF50677">
    <property type="entry name" value="ValRS/IleRS/LeuRS editing domain"/>
    <property type="match status" value="1"/>
</dbReference>
<dbReference type="PROSITE" id="PS00178">
    <property type="entry name" value="AA_TRNA_LIGASE_I"/>
    <property type="match status" value="1"/>
</dbReference>
<organism>
    <name type="scientific">Paenarthrobacter aurescens (strain TC1)</name>
    <dbReference type="NCBI Taxonomy" id="290340"/>
    <lineage>
        <taxon>Bacteria</taxon>
        <taxon>Bacillati</taxon>
        <taxon>Actinomycetota</taxon>
        <taxon>Actinomycetes</taxon>
        <taxon>Micrococcales</taxon>
        <taxon>Micrococcaceae</taxon>
        <taxon>Paenarthrobacter</taxon>
    </lineage>
</organism>
<name>SYL_PAEAT</name>
<sequence>MSVKPETETGTAQTAAAEAPEEGVYSFAAMEAKWPQVWEDLKVFTPADDGSRERRYVLDMFPYPSGDLHMGHAEAFAMGDVVARYLRQKGFDVLHPIGWDSFGLPAENAAIKRNAHPSEWTYANIDTQAASFKRYAISADWSRRLHTSDPEYYRWTQWLFKRFYERGLAYRKDSPVNWCPKDLTVLANEQVVNGACERCGTPVTKKSLNQWYFKITDYADRLLEDMDQLQGHWPERVLAMQRNWIGRSEGAHVRFVIEATADRAEREVTVFTTRPDTLYGATFFVVAADAHLALDLVTPEQHDELMAYREKVKALSEIERQSTEREKTGVFTGRYAINPLNGEKLPVWAADYVLADYGTGAIMAVPAHDQRDLDFAKTFGLPVRAVLDTGDEDPAETGVATAGEGTLKNSGELDGLSKSEGIPAAIEILEKLGTGEKFVNFRLRDWLLSRQRFWGTPIPIIHCGECGEVPVPDDQLPVRLPDDLRGEALSPKGTSPLAAAVEWVNVECPNCGRAAQRDTDTMDTFVDSSWYFLRFVSPDYTEGPFDPEKINNWMPVGQYVGGVEHAILHLLYARFFTKVIKDIGLIEANEPFSALLNQGQVLNGGKAMSKSLGNGVDLGEQLDKFGVDAVRLTMVFASPPEDDVDWADVSPSGSAKFLARAWRLGQDVSSEPGVDPATGDRALRTVTHKTIADAAELLDNNKFNVVVARLMELVNATRKTIDSGAGAADPAVREAVEAVAVILSLFAPYTAEDLWNTLGHPASVANAGWPKHDDALLVQDTVTAVVQVQGKVRDRLEVSPDITEDALRELALASENVQRALDGRGIRTVIVRAPKLVNIVPA</sequence>
<proteinExistence type="inferred from homology"/>
<feature type="chain" id="PRO_0000334728" description="Leucine--tRNA ligase">
    <location>
        <begin position="1"/>
        <end position="842"/>
    </location>
</feature>
<feature type="region of interest" description="Disordered" evidence="2">
    <location>
        <begin position="390"/>
        <end position="414"/>
    </location>
</feature>
<feature type="short sequence motif" description="'HIGH' region">
    <location>
        <begin position="62"/>
        <end position="72"/>
    </location>
</feature>
<feature type="short sequence motif" description="'KMSKS' region">
    <location>
        <begin position="607"/>
        <end position="611"/>
    </location>
</feature>
<feature type="binding site" evidence="1">
    <location>
        <position position="610"/>
    </location>
    <ligand>
        <name>ATP</name>
        <dbReference type="ChEBI" id="CHEBI:30616"/>
    </ligand>
</feature>
<comment type="catalytic activity">
    <reaction evidence="1">
        <text>tRNA(Leu) + L-leucine + ATP = L-leucyl-tRNA(Leu) + AMP + diphosphate</text>
        <dbReference type="Rhea" id="RHEA:11688"/>
        <dbReference type="Rhea" id="RHEA-COMP:9613"/>
        <dbReference type="Rhea" id="RHEA-COMP:9622"/>
        <dbReference type="ChEBI" id="CHEBI:30616"/>
        <dbReference type="ChEBI" id="CHEBI:33019"/>
        <dbReference type="ChEBI" id="CHEBI:57427"/>
        <dbReference type="ChEBI" id="CHEBI:78442"/>
        <dbReference type="ChEBI" id="CHEBI:78494"/>
        <dbReference type="ChEBI" id="CHEBI:456215"/>
        <dbReference type="EC" id="6.1.1.4"/>
    </reaction>
</comment>
<comment type="subcellular location">
    <subcellularLocation>
        <location evidence="1">Cytoplasm</location>
    </subcellularLocation>
</comment>
<comment type="similarity">
    <text evidence="1">Belongs to the class-I aminoacyl-tRNA synthetase family.</text>
</comment>
<comment type="sequence caution" evidence="3">
    <conflict type="erroneous initiation">
        <sequence resource="EMBL-CDS" id="ABM09960"/>
    </conflict>
</comment>
<accession>A1R6X5</accession>
<keyword id="KW-0030">Aminoacyl-tRNA synthetase</keyword>
<keyword id="KW-0067">ATP-binding</keyword>
<keyword id="KW-0963">Cytoplasm</keyword>
<keyword id="KW-0436">Ligase</keyword>
<keyword id="KW-0547">Nucleotide-binding</keyword>
<keyword id="KW-0648">Protein biosynthesis</keyword>
<evidence type="ECO:0000255" key="1">
    <source>
        <dbReference type="HAMAP-Rule" id="MF_00049"/>
    </source>
</evidence>
<evidence type="ECO:0000256" key="2">
    <source>
        <dbReference type="SAM" id="MobiDB-lite"/>
    </source>
</evidence>
<evidence type="ECO:0000305" key="3"/>